<accession>B0K9W9</accession>
<organism>
    <name type="scientific">Thermoanaerobacter pseudethanolicus (strain ATCC 33223 / 39E)</name>
    <name type="common">Clostridium thermohydrosulfuricum</name>
    <dbReference type="NCBI Taxonomy" id="340099"/>
    <lineage>
        <taxon>Bacteria</taxon>
        <taxon>Bacillati</taxon>
        <taxon>Bacillota</taxon>
        <taxon>Clostridia</taxon>
        <taxon>Thermoanaerobacterales</taxon>
        <taxon>Thermoanaerobacteraceae</taxon>
        <taxon>Thermoanaerobacter</taxon>
    </lineage>
</organism>
<gene>
    <name type="ordered locus">Teth39_1278</name>
</gene>
<reference key="1">
    <citation type="submission" date="2008-01" db="EMBL/GenBank/DDBJ databases">
        <title>Complete sequence of Thermoanaerobacter pseudethanolicus 39E.</title>
        <authorList>
            <person name="Copeland A."/>
            <person name="Lucas S."/>
            <person name="Lapidus A."/>
            <person name="Barry K."/>
            <person name="Glavina del Rio T."/>
            <person name="Dalin E."/>
            <person name="Tice H."/>
            <person name="Pitluck S."/>
            <person name="Bruce D."/>
            <person name="Goodwin L."/>
            <person name="Saunders E."/>
            <person name="Brettin T."/>
            <person name="Detter J.C."/>
            <person name="Han C."/>
            <person name="Schmutz J."/>
            <person name="Larimer F."/>
            <person name="Land M."/>
            <person name="Hauser L."/>
            <person name="Kyrpides N."/>
            <person name="Lykidis A."/>
            <person name="Hemme C."/>
            <person name="Fields M.W."/>
            <person name="He Z."/>
            <person name="Zhou J."/>
            <person name="Richardson P."/>
        </authorList>
    </citation>
    <scope>NUCLEOTIDE SEQUENCE [LARGE SCALE GENOMIC DNA]</scope>
    <source>
        <strain>ATCC 33223 / DSM 2355 / 39E</strain>
    </source>
</reference>
<proteinExistence type="inferred from homology"/>
<keyword id="KW-1185">Reference proteome</keyword>
<evidence type="ECO:0000255" key="1">
    <source>
        <dbReference type="HAMAP-Rule" id="MF_00245"/>
    </source>
</evidence>
<name>Y1278_THEP3</name>
<comment type="function">
    <text evidence="1">Might take part in the signal recognition particle (SRP) pathway. This is inferred from the conservation of its genetic proximity to ftsY/ffh. May be a regulatory protein.</text>
</comment>
<comment type="similarity">
    <text evidence="1">Belongs to the UPF0122 family.</text>
</comment>
<feature type="chain" id="PRO_1000100821" description="UPF0122 protein Teth39_1278">
    <location>
        <begin position="1"/>
        <end position="117"/>
    </location>
</feature>
<dbReference type="EMBL" id="CP000924">
    <property type="protein sequence ID" value="ABY94932.1"/>
    <property type="molecule type" value="Genomic_DNA"/>
</dbReference>
<dbReference type="RefSeq" id="WP_004396175.1">
    <property type="nucleotide sequence ID" value="NC_010321.1"/>
</dbReference>
<dbReference type="SMR" id="B0K9W9"/>
<dbReference type="STRING" id="340099.Teth39_1278"/>
<dbReference type="KEGG" id="tpd:Teth39_1278"/>
<dbReference type="eggNOG" id="COG2739">
    <property type="taxonomic scope" value="Bacteria"/>
</dbReference>
<dbReference type="HOGENOM" id="CLU_129218_0_2_9"/>
<dbReference type="Proteomes" id="UP000002156">
    <property type="component" value="Chromosome"/>
</dbReference>
<dbReference type="Gene3D" id="1.10.10.10">
    <property type="entry name" value="Winged helix-like DNA-binding domain superfamily/Winged helix DNA-binding domain"/>
    <property type="match status" value="1"/>
</dbReference>
<dbReference type="HAMAP" id="MF_00245">
    <property type="entry name" value="UPF0122"/>
    <property type="match status" value="1"/>
</dbReference>
<dbReference type="InterPro" id="IPR013324">
    <property type="entry name" value="RNA_pol_sigma_r3/r4-like"/>
</dbReference>
<dbReference type="InterPro" id="IPR007394">
    <property type="entry name" value="UPF0122"/>
</dbReference>
<dbReference type="InterPro" id="IPR054831">
    <property type="entry name" value="UPF0122_fam_protein"/>
</dbReference>
<dbReference type="InterPro" id="IPR036388">
    <property type="entry name" value="WH-like_DNA-bd_sf"/>
</dbReference>
<dbReference type="NCBIfam" id="NF001071">
    <property type="entry name" value="PRK00118.2-1"/>
    <property type="match status" value="1"/>
</dbReference>
<dbReference type="NCBIfam" id="NF045758">
    <property type="entry name" value="YlxM"/>
    <property type="match status" value="1"/>
</dbReference>
<dbReference type="PANTHER" id="PTHR40083">
    <property type="entry name" value="UPF0122 PROTEIN CBO2450/CLC_2298"/>
    <property type="match status" value="1"/>
</dbReference>
<dbReference type="PANTHER" id="PTHR40083:SF1">
    <property type="entry name" value="UPF0122 PROTEIN YLXM"/>
    <property type="match status" value="1"/>
</dbReference>
<dbReference type="Pfam" id="PF04297">
    <property type="entry name" value="UPF0122"/>
    <property type="match status" value="1"/>
</dbReference>
<dbReference type="SUPFAM" id="SSF88659">
    <property type="entry name" value="Sigma3 and sigma4 domains of RNA polymerase sigma factors"/>
    <property type="match status" value="1"/>
</dbReference>
<protein>
    <recommendedName>
        <fullName evidence="1">UPF0122 protein Teth39_1278</fullName>
    </recommendedName>
</protein>
<sequence length="117" mass="14058">MDDDFLFMTLLYDFYGALLTDKQREIFEMYYLNDYSLGEISELLDISRQGVYDTLKRAESSLEFFEEKLGLVKRHQEIMNKLDKIKKGIEIIRERERDPEILKIIEEIAREIEELNP</sequence>